<dbReference type="EC" id="4.2.1.-" evidence="1"/>
<dbReference type="EMBL" id="CP000264">
    <property type="protein sequence ID" value="ABD55487.1"/>
    <property type="molecule type" value="Genomic_DNA"/>
</dbReference>
<dbReference type="RefSeq" id="WP_011455691.1">
    <property type="nucleotide sequence ID" value="NC_007802.1"/>
</dbReference>
<dbReference type="SMR" id="Q28P75"/>
<dbReference type="STRING" id="290400.Jann_2570"/>
<dbReference type="KEGG" id="jan:Jann_2570"/>
<dbReference type="eggNOG" id="COG4336">
    <property type="taxonomic scope" value="Bacteria"/>
</dbReference>
<dbReference type="HOGENOM" id="CLU_059759_0_0_5"/>
<dbReference type="OrthoDB" id="149585at2"/>
<dbReference type="Proteomes" id="UP000008326">
    <property type="component" value="Chromosome"/>
</dbReference>
<dbReference type="GO" id="GO:0016829">
    <property type="term" value="F:lyase activity"/>
    <property type="evidence" value="ECO:0007669"/>
    <property type="project" value="UniProtKB-KW"/>
</dbReference>
<dbReference type="FunFam" id="3.30.2040.10:FF:000001">
    <property type="entry name" value="D-glutamate cyclase, mitochondrial"/>
    <property type="match status" value="1"/>
</dbReference>
<dbReference type="Gene3D" id="3.40.1640.10">
    <property type="entry name" value="PSTPO5379-like"/>
    <property type="match status" value="1"/>
</dbReference>
<dbReference type="Gene3D" id="3.30.2040.10">
    <property type="entry name" value="PSTPO5379-like domain"/>
    <property type="match status" value="1"/>
</dbReference>
<dbReference type="HAMAP" id="MF_01830">
    <property type="entry name" value="Hydro_lyase"/>
    <property type="match status" value="1"/>
</dbReference>
<dbReference type="InterPro" id="IPR009906">
    <property type="entry name" value="D-Glu_cyclase"/>
</dbReference>
<dbReference type="InterPro" id="IPR038021">
    <property type="entry name" value="Putative_hydro-lyase"/>
</dbReference>
<dbReference type="InterPro" id="IPR016938">
    <property type="entry name" value="UPF0317"/>
</dbReference>
<dbReference type="NCBIfam" id="NF003969">
    <property type="entry name" value="PRK05463.1"/>
    <property type="match status" value="1"/>
</dbReference>
<dbReference type="PANTHER" id="PTHR32022">
    <property type="entry name" value="D-GLUTAMATE CYCLASE, MITOCHONDRIAL"/>
    <property type="match status" value="1"/>
</dbReference>
<dbReference type="PANTHER" id="PTHR32022:SF10">
    <property type="entry name" value="D-GLUTAMATE CYCLASE, MITOCHONDRIAL"/>
    <property type="match status" value="1"/>
</dbReference>
<dbReference type="Pfam" id="PF07286">
    <property type="entry name" value="D-Glu_cyclase"/>
    <property type="match status" value="1"/>
</dbReference>
<dbReference type="PIRSF" id="PIRSF029755">
    <property type="entry name" value="UCP029755"/>
    <property type="match status" value="1"/>
</dbReference>
<dbReference type="SUPFAM" id="SSF160920">
    <property type="entry name" value="PSTPO5379-like"/>
    <property type="match status" value="1"/>
</dbReference>
<proteinExistence type="inferred from homology"/>
<accession>Q28P75</accession>
<name>Y2570_JANSC</name>
<keyword id="KW-0456">Lyase</keyword>
<keyword id="KW-1185">Reference proteome</keyword>
<gene>
    <name type="ordered locus">Jann_2570</name>
</gene>
<reference key="1">
    <citation type="submission" date="2006-02" db="EMBL/GenBank/DDBJ databases">
        <title>Complete sequence of chromosome of Jannaschia sp. CCS1.</title>
        <authorList>
            <consortium name="US DOE Joint Genome Institute"/>
            <person name="Copeland A."/>
            <person name="Lucas S."/>
            <person name="Lapidus A."/>
            <person name="Barry K."/>
            <person name="Detter J.C."/>
            <person name="Glavina del Rio T."/>
            <person name="Hammon N."/>
            <person name="Israni S."/>
            <person name="Pitluck S."/>
            <person name="Brettin T."/>
            <person name="Bruce D."/>
            <person name="Han C."/>
            <person name="Tapia R."/>
            <person name="Gilna P."/>
            <person name="Chertkov O."/>
            <person name="Saunders E."/>
            <person name="Schmutz J."/>
            <person name="Larimer F."/>
            <person name="Land M."/>
            <person name="Kyrpides N."/>
            <person name="Lykidis A."/>
            <person name="Moran M.A."/>
            <person name="Belas R."/>
            <person name="Ye W."/>
            <person name="Buchan A."/>
            <person name="Gonzalez J.M."/>
            <person name="Schell M.A."/>
            <person name="Richardson P."/>
        </authorList>
    </citation>
    <scope>NUCLEOTIDE SEQUENCE [LARGE SCALE GENOMIC DNA]</scope>
    <source>
        <strain>CCS1</strain>
    </source>
</reference>
<evidence type="ECO:0000255" key="1">
    <source>
        <dbReference type="HAMAP-Rule" id="MF_01830"/>
    </source>
</evidence>
<feature type="chain" id="PRO_0000379840" description="Putative hydro-lyase Jann_2570">
    <location>
        <begin position="1"/>
        <end position="266"/>
    </location>
</feature>
<organism>
    <name type="scientific">Jannaschia sp. (strain CCS1)</name>
    <dbReference type="NCBI Taxonomy" id="290400"/>
    <lineage>
        <taxon>Bacteria</taxon>
        <taxon>Pseudomonadati</taxon>
        <taxon>Pseudomonadota</taxon>
        <taxon>Alphaproteobacteria</taxon>
        <taxon>Rhodobacterales</taxon>
        <taxon>Roseobacteraceae</taxon>
        <taxon>Jannaschia</taxon>
    </lineage>
</organism>
<comment type="similarity">
    <text evidence="1">Belongs to the D-glutamate cyclase family.</text>
</comment>
<protein>
    <recommendedName>
        <fullName evidence="1">Putative hydro-lyase Jann_2570</fullName>
        <ecNumber evidence="1">4.2.1.-</ecNumber>
    </recommendedName>
</protein>
<sequence>MGLHSTADAAAIRASIRSGAFGGHTSGMAPGKLQCNLAILPAAHALDFLRFCQRNPKPCPVVGVSETGDPMLPTLGVDIDIRTDVPRYRIFRDGVLTGEVTDIRDLWTDDLVSVALGCSFTFENALVRAGIPVRHIEDGVNVPMFRTNIPLVPAGPFNGHMVVTMRPIPEAMVDKAHGISARFPQAHGAPIATGDPRALGIADLAKPDYGDAVAVKPGEVPVFWACGVTPQNVLRDARLPLCITHSPGHMLISDVAEDAETPIYQS</sequence>